<gene>
    <name evidence="1" type="primary">rimM</name>
    <name type="ordered locus">M446_3681</name>
</gene>
<sequence>MARRPQRPAPSGRAGAGRGAAGAAPPGPDARLVVLGEFGRAHGLQGEVRLKSYTAEPMAIGGYGPLLASDGRVVELTALRPAAGTPDILVARVAGVAGRSAAEGLNRLTLSVPRDRLGAPEDEDEFFTADLVGLAAVDAAGTRLGTIRAVPNYGGGDLLEIEPEGGGRPALLPFTRLFVPKVEIAAGRVTIAPPEDLFAPPGPPPEGEG</sequence>
<accession>B0UCL3</accession>
<reference key="1">
    <citation type="submission" date="2008-02" db="EMBL/GenBank/DDBJ databases">
        <title>Complete sequence of chromosome of Methylobacterium sp. 4-46.</title>
        <authorList>
            <consortium name="US DOE Joint Genome Institute"/>
            <person name="Copeland A."/>
            <person name="Lucas S."/>
            <person name="Lapidus A."/>
            <person name="Glavina del Rio T."/>
            <person name="Dalin E."/>
            <person name="Tice H."/>
            <person name="Bruce D."/>
            <person name="Goodwin L."/>
            <person name="Pitluck S."/>
            <person name="Chertkov O."/>
            <person name="Brettin T."/>
            <person name="Detter J.C."/>
            <person name="Han C."/>
            <person name="Kuske C.R."/>
            <person name="Schmutz J."/>
            <person name="Larimer F."/>
            <person name="Land M."/>
            <person name="Hauser L."/>
            <person name="Kyrpides N."/>
            <person name="Ivanova N."/>
            <person name="Marx C.J."/>
            <person name="Richardson P."/>
        </authorList>
    </citation>
    <scope>NUCLEOTIDE SEQUENCE [LARGE SCALE GENOMIC DNA]</scope>
    <source>
        <strain>4-46</strain>
    </source>
</reference>
<protein>
    <recommendedName>
        <fullName evidence="1">Ribosome maturation factor RimM</fullName>
    </recommendedName>
</protein>
<keyword id="KW-0143">Chaperone</keyword>
<keyword id="KW-0963">Cytoplasm</keyword>
<keyword id="KW-0690">Ribosome biogenesis</keyword>
<keyword id="KW-0698">rRNA processing</keyword>
<proteinExistence type="inferred from homology"/>
<comment type="function">
    <text evidence="1">An accessory protein needed during the final step in the assembly of 30S ribosomal subunit, possibly for assembly of the head region. Essential for efficient processing of 16S rRNA. May be needed both before and after RbfA during the maturation of 16S rRNA. It has affinity for free ribosomal 30S subunits but not for 70S ribosomes.</text>
</comment>
<comment type="subunit">
    <text evidence="1">Binds ribosomal protein uS19.</text>
</comment>
<comment type="subcellular location">
    <subcellularLocation>
        <location evidence="1">Cytoplasm</location>
    </subcellularLocation>
</comment>
<comment type="domain">
    <text evidence="1">The PRC barrel domain binds ribosomal protein uS19.</text>
</comment>
<comment type="similarity">
    <text evidence="1">Belongs to the RimM family.</text>
</comment>
<comment type="sequence caution" evidence="3">
    <conflict type="erroneous initiation">
        <sequence resource="EMBL-CDS" id="ACA18062"/>
    </conflict>
</comment>
<evidence type="ECO:0000255" key="1">
    <source>
        <dbReference type="HAMAP-Rule" id="MF_00014"/>
    </source>
</evidence>
<evidence type="ECO:0000256" key="2">
    <source>
        <dbReference type="SAM" id="MobiDB-lite"/>
    </source>
</evidence>
<evidence type="ECO:0000305" key="3"/>
<organism>
    <name type="scientific">Methylobacterium sp. (strain 4-46)</name>
    <dbReference type="NCBI Taxonomy" id="426117"/>
    <lineage>
        <taxon>Bacteria</taxon>
        <taxon>Pseudomonadati</taxon>
        <taxon>Pseudomonadota</taxon>
        <taxon>Alphaproteobacteria</taxon>
        <taxon>Hyphomicrobiales</taxon>
        <taxon>Methylobacteriaceae</taxon>
        <taxon>Methylobacterium</taxon>
    </lineage>
</organism>
<feature type="chain" id="PRO_0000351778" description="Ribosome maturation factor RimM">
    <location>
        <begin position="1"/>
        <end position="209"/>
    </location>
</feature>
<feature type="domain" description="PRC barrel" evidence="1">
    <location>
        <begin position="123"/>
        <end position="197"/>
    </location>
</feature>
<feature type="region of interest" description="Disordered" evidence="2">
    <location>
        <begin position="1"/>
        <end position="28"/>
    </location>
</feature>
<name>RIMM_METS4</name>
<dbReference type="EMBL" id="CP000943">
    <property type="protein sequence ID" value="ACA18062.1"/>
    <property type="status" value="ALT_INIT"/>
    <property type="molecule type" value="Genomic_DNA"/>
</dbReference>
<dbReference type="SMR" id="B0UCL3"/>
<dbReference type="STRING" id="426117.M446_3681"/>
<dbReference type="KEGG" id="met:M446_3681"/>
<dbReference type="eggNOG" id="COG0806">
    <property type="taxonomic scope" value="Bacteria"/>
</dbReference>
<dbReference type="HOGENOM" id="CLU_077636_0_1_5"/>
<dbReference type="GO" id="GO:0005737">
    <property type="term" value="C:cytoplasm"/>
    <property type="evidence" value="ECO:0007669"/>
    <property type="project" value="UniProtKB-SubCell"/>
</dbReference>
<dbReference type="GO" id="GO:0005840">
    <property type="term" value="C:ribosome"/>
    <property type="evidence" value="ECO:0007669"/>
    <property type="project" value="InterPro"/>
</dbReference>
<dbReference type="GO" id="GO:0043022">
    <property type="term" value="F:ribosome binding"/>
    <property type="evidence" value="ECO:0007669"/>
    <property type="project" value="InterPro"/>
</dbReference>
<dbReference type="GO" id="GO:0042274">
    <property type="term" value="P:ribosomal small subunit biogenesis"/>
    <property type="evidence" value="ECO:0007669"/>
    <property type="project" value="UniProtKB-UniRule"/>
</dbReference>
<dbReference type="GO" id="GO:0006364">
    <property type="term" value="P:rRNA processing"/>
    <property type="evidence" value="ECO:0007669"/>
    <property type="project" value="UniProtKB-UniRule"/>
</dbReference>
<dbReference type="Gene3D" id="2.30.30.240">
    <property type="entry name" value="PRC-barrel domain"/>
    <property type="match status" value="1"/>
</dbReference>
<dbReference type="Gene3D" id="2.40.30.60">
    <property type="entry name" value="RimM"/>
    <property type="match status" value="1"/>
</dbReference>
<dbReference type="HAMAP" id="MF_00014">
    <property type="entry name" value="Ribosome_mat_RimM"/>
    <property type="match status" value="1"/>
</dbReference>
<dbReference type="InterPro" id="IPR011033">
    <property type="entry name" value="PRC_barrel-like_sf"/>
</dbReference>
<dbReference type="InterPro" id="IPR056792">
    <property type="entry name" value="PRC_RimM"/>
</dbReference>
<dbReference type="InterPro" id="IPR011961">
    <property type="entry name" value="RimM"/>
</dbReference>
<dbReference type="InterPro" id="IPR002676">
    <property type="entry name" value="RimM_N"/>
</dbReference>
<dbReference type="InterPro" id="IPR036976">
    <property type="entry name" value="RimM_N_sf"/>
</dbReference>
<dbReference type="InterPro" id="IPR009000">
    <property type="entry name" value="Transl_B-barrel_sf"/>
</dbReference>
<dbReference type="NCBIfam" id="TIGR02273">
    <property type="entry name" value="16S_RimM"/>
    <property type="match status" value="1"/>
</dbReference>
<dbReference type="PANTHER" id="PTHR33692">
    <property type="entry name" value="RIBOSOME MATURATION FACTOR RIMM"/>
    <property type="match status" value="1"/>
</dbReference>
<dbReference type="PANTHER" id="PTHR33692:SF1">
    <property type="entry name" value="RIBOSOME MATURATION FACTOR RIMM"/>
    <property type="match status" value="1"/>
</dbReference>
<dbReference type="Pfam" id="PF24986">
    <property type="entry name" value="PRC_RimM"/>
    <property type="match status" value="1"/>
</dbReference>
<dbReference type="Pfam" id="PF01782">
    <property type="entry name" value="RimM"/>
    <property type="match status" value="1"/>
</dbReference>
<dbReference type="SUPFAM" id="SSF50346">
    <property type="entry name" value="PRC-barrel domain"/>
    <property type="match status" value="1"/>
</dbReference>
<dbReference type="SUPFAM" id="SSF50447">
    <property type="entry name" value="Translation proteins"/>
    <property type="match status" value="1"/>
</dbReference>